<dbReference type="EMBL" id="AP009240">
    <property type="protein sequence ID" value="BAG76898.1"/>
    <property type="molecule type" value="Genomic_DNA"/>
</dbReference>
<dbReference type="RefSeq" id="WP_000138717.1">
    <property type="nucleotide sequence ID" value="NC_011415.1"/>
</dbReference>
<dbReference type="SMR" id="B6IA37"/>
<dbReference type="KEGG" id="ecy:ECSE_1374"/>
<dbReference type="HOGENOM" id="CLU_057693_2_0_6"/>
<dbReference type="Proteomes" id="UP000008199">
    <property type="component" value="Chromosome"/>
</dbReference>
<dbReference type="GO" id="GO:0005886">
    <property type="term" value="C:plasma membrane"/>
    <property type="evidence" value="ECO:0007669"/>
    <property type="project" value="UniProtKB-SubCell"/>
</dbReference>
<dbReference type="HAMAP" id="MF_01085">
    <property type="entry name" value="UPF0283"/>
    <property type="match status" value="1"/>
</dbReference>
<dbReference type="InterPro" id="IPR021147">
    <property type="entry name" value="DUF697"/>
</dbReference>
<dbReference type="InterPro" id="IPR006507">
    <property type="entry name" value="UPF0283"/>
</dbReference>
<dbReference type="NCBIfam" id="TIGR01620">
    <property type="entry name" value="hyp_HI0043"/>
    <property type="match status" value="1"/>
</dbReference>
<dbReference type="PANTHER" id="PTHR39342">
    <property type="entry name" value="UPF0283 MEMBRANE PROTEIN YCJF"/>
    <property type="match status" value="1"/>
</dbReference>
<dbReference type="PANTHER" id="PTHR39342:SF1">
    <property type="entry name" value="UPF0283 MEMBRANE PROTEIN YCJF"/>
    <property type="match status" value="1"/>
</dbReference>
<dbReference type="Pfam" id="PF05128">
    <property type="entry name" value="DUF697"/>
    <property type="match status" value="1"/>
</dbReference>
<accession>B6IA37</accession>
<organism>
    <name type="scientific">Escherichia coli (strain SE11)</name>
    <dbReference type="NCBI Taxonomy" id="409438"/>
    <lineage>
        <taxon>Bacteria</taxon>
        <taxon>Pseudomonadati</taxon>
        <taxon>Pseudomonadota</taxon>
        <taxon>Gammaproteobacteria</taxon>
        <taxon>Enterobacterales</taxon>
        <taxon>Enterobacteriaceae</taxon>
        <taxon>Escherichia</taxon>
    </lineage>
</organism>
<feature type="chain" id="PRO_1000136886" description="UPF0283 membrane protein YcjF">
    <location>
        <begin position="1"/>
        <end position="353"/>
    </location>
</feature>
<feature type="transmembrane region" description="Helical" evidence="1">
    <location>
        <begin position="70"/>
        <end position="90"/>
    </location>
</feature>
<feature type="transmembrane region" description="Helical" evidence="1">
    <location>
        <begin position="100"/>
        <end position="120"/>
    </location>
</feature>
<feature type="transmembrane region" description="Helical" evidence="1">
    <location>
        <begin position="213"/>
        <end position="233"/>
    </location>
</feature>
<proteinExistence type="inferred from homology"/>
<name>YCJF_ECOSE</name>
<comment type="subcellular location">
    <subcellularLocation>
        <location evidence="1">Cell inner membrane</location>
        <topology evidence="1">Multi-pass membrane protein</topology>
    </subcellularLocation>
</comment>
<comment type="similarity">
    <text evidence="1">Belongs to the UPF0283 family.</text>
</comment>
<protein>
    <recommendedName>
        <fullName evidence="1">UPF0283 membrane protein YcjF</fullName>
    </recommendedName>
</protein>
<gene>
    <name evidence="1" type="primary">ycjF</name>
    <name type="ordered locus">ECSE_1374</name>
</gene>
<sequence>MTEPLKPRIDFDGPLEVDQNPKFRAQQTFDENQAQNFAPATLDEAPEEEGQVEAVMDAALRPKRSLWRKMVMGGLALFGASVVGQGVQWTMNAWQTQDWVALGGCAAGALIIGAGVGSVVTEWRRLWRLRQRAHERDEARDLLHSHGTGKGRAFCEKLAQQAGIDQSHPALQRWYASIHETQNDREVVSLYAHLVQPVLDAQARREISRSAAESTLMIAVSPLALVDMAFIAWRNLRLINRIATLYGIELGYYSRLRLFKLVLLNIAFAGASELVREVGMDWMSQDLAARLSTRAAQGIGAGLLTARLGIKAMELCRPLPWIDDDKPRLGDFRRQLIGQVKETLQKGKTPSEK</sequence>
<keyword id="KW-0997">Cell inner membrane</keyword>
<keyword id="KW-1003">Cell membrane</keyword>
<keyword id="KW-0472">Membrane</keyword>
<keyword id="KW-0812">Transmembrane</keyword>
<keyword id="KW-1133">Transmembrane helix</keyword>
<reference key="1">
    <citation type="journal article" date="2008" name="DNA Res.">
        <title>Complete genome sequence and comparative analysis of the wild-type commensal Escherichia coli strain SE11 isolated from a healthy adult.</title>
        <authorList>
            <person name="Oshima K."/>
            <person name="Toh H."/>
            <person name="Ogura Y."/>
            <person name="Sasamoto H."/>
            <person name="Morita H."/>
            <person name="Park S.-H."/>
            <person name="Ooka T."/>
            <person name="Iyoda S."/>
            <person name="Taylor T.D."/>
            <person name="Hayashi T."/>
            <person name="Itoh K."/>
            <person name="Hattori M."/>
        </authorList>
    </citation>
    <scope>NUCLEOTIDE SEQUENCE [LARGE SCALE GENOMIC DNA]</scope>
    <source>
        <strain>SE11</strain>
    </source>
</reference>
<evidence type="ECO:0000255" key="1">
    <source>
        <dbReference type="HAMAP-Rule" id="MF_01085"/>
    </source>
</evidence>